<gene>
    <name type="primary">vraX</name>
    <name type="ordered locus">SAV0579</name>
</gene>
<name>VRAX_STAAM</name>
<organism>
    <name type="scientific">Staphylococcus aureus (strain Mu50 / ATCC 700699)</name>
    <dbReference type="NCBI Taxonomy" id="158878"/>
    <lineage>
        <taxon>Bacteria</taxon>
        <taxon>Bacillati</taxon>
        <taxon>Bacillota</taxon>
        <taxon>Bacilli</taxon>
        <taxon>Bacillales</taxon>
        <taxon>Staphylococcaceae</taxon>
        <taxon>Staphylococcus</taxon>
    </lineage>
</organism>
<proteinExistence type="predicted"/>
<protein>
    <recommendedName>
        <fullName>Protein VraX</fullName>
    </recommendedName>
</protein>
<reference key="1">
    <citation type="journal article" date="2001" name="Lancet">
        <title>Whole genome sequencing of meticillin-resistant Staphylococcus aureus.</title>
        <authorList>
            <person name="Kuroda M."/>
            <person name="Ohta T."/>
            <person name="Uchiyama I."/>
            <person name="Baba T."/>
            <person name="Yuzawa H."/>
            <person name="Kobayashi I."/>
            <person name="Cui L."/>
            <person name="Oguchi A."/>
            <person name="Aoki K."/>
            <person name="Nagai Y."/>
            <person name="Lian J.-Q."/>
            <person name="Ito T."/>
            <person name="Kanamori M."/>
            <person name="Matsumaru H."/>
            <person name="Maruyama A."/>
            <person name="Murakami H."/>
            <person name="Hosoyama A."/>
            <person name="Mizutani-Ui Y."/>
            <person name="Takahashi N.K."/>
            <person name="Sawano T."/>
            <person name="Inoue R."/>
            <person name="Kaito C."/>
            <person name="Sekimizu K."/>
            <person name="Hirakawa H."/>
            <person name="Kuhara S."/>
            <person name="Goto S."/>
            <person name="Yabuzaki J."/>
            <person name="Kanehisa M."/>
            <person name="Yamashita A."/>
            <person name="Oshima K."/>
            <person name="Furuya K."/>
            <person name="Yoshino C."/>
            <person name="Shiba T."/>
            <person name="Hattori M."/>
            <person name="Ogasawara N."/>
            <person name="Hayashi H."/>
            <person name="Hiramatsu K."/>
        </authorList>
    </citation>
    <scope>NUCLEOTIDE SEQUENCE [LARGE SCALE GENOMIC DNA]</scope>
    <source>
        <strain>Mu50 / ATCC 700699</strain>
    </source>
</reference>
<accession>Q7A2W7</accession>
<sequence length="55" mass="6500">MIIYRQYHHEGAPVYEIITKTFQHVSIKCDDSFSDTEIFKLLSLLQDDIDHMKVS</sequence>
<feature type="chain" id="PRO_0000065921" description="Protein VraX">
    <location>
        <begin position="1"/>
        <end position="55"/>
    </location>
</feature>
<dbReference type="EMBL" id="BA000017">
    <property type="protein sequence ID" value="BAB56741.1"/>
    <property type="molecule type" value="Genomic_DNA"/>
</dbReference>
<dbReference type="RefSeq" id="WP_000587958.1">
    <property type="nucleotide sequence ID" value="NC_002758.2"/>
</dbReference>
<dbReference type="TCDB" id="3.A.1.134.7">
    <property type="family name" value="the atp-binding cassette (abc) superfamily"/>
</dbReference>
<dbReference type="GeneID" id="98344911"/>
<dbReference type="KEGG" id="sav:SAV0579"/>
<dbReference type="HOGENOM" id="CLU_212227_0_0_9"/>
<dbReference type="Proteomes" id="UP000002481">
    <property type="component" value="Chromosome"/>
</dbReference>
<dbReference type="InterPro" id="IPR035374">
    <property type="entry name" value="VraX"/>
</dbReference>
<dbReference type="Pfam" id="PF17412">
    <property type="entry name" value="VraX"/>
    <property type="match status" value="1"/>
</dbReference>